<gene>
    <name evidence="1" type="primary">ppc</name>
    <name type="ordered locus">SSPA3683</name>
</gene>
<dbReference type="EC" id="4.1.1.31" evidence="1"/>
<dbReference type="EMBL" id="FM200053">
    <property type="protein sequence ID" value="CAR61966.1"/>
    <property type="molecule type" value="Genomic_DNA"/>
</dbReference>
<dbReference type="RefSeq" id="WP_001005555.1">
    <property type="nucleotide sequence ID" value="NC_011147.1"/>
</dbReference>
<dbReference type="SMR" id="B5BJN0"/>
<dbReference type="KEGG" id="sek:SSPA3683"/>
<dbReference type="HOGENOM" id="CLU_006557_2_0_6"/>
<dbReference type="Proteomes" id="UP000001869">
    <property type="component" value="Chromosome"/>
</dbReference>
<dbReference type="GO" id="GO:0005829">
    <property type="term" value="C:cytosol"/>
    <property type="evidence" value="ECO:0007669"/>
    <property type="project" value="TreeGrafter"/>
</dbReference>
<dbReference type="GO" id="GO:0000287">
    <property type="term" value="F:magnesium ion binding"/>
    <property type="evidence" value="ECO:0007669"/>
    <property type="project" value="UniProtKB-UniRule"/>
</dbReference>
<dbReference type="GO" id="GO:0008964">
    <property type="term" value="F:phosphoenolpyruvate carboxylase activity"/>
    <property type="evidence" value="ECO:0007669"/>
    <property type="project" value="UniProtKB-UniRule"/>
</dbReference>
<dbReference type="GO" id="GO:0015977">
    <property type="term" value="P:carbon fixation"/>
    <property type="evidence" value="ECO:0007669"/>
    <property type="project" value="UniProtKB-UniRule"/>
</dbReference>
<dbReference type="GO" id="GO:0006107">
    <property type="term" value="P:oxaloacetate metabolic process"/>
    <property type="evidence" value="ECO:0007669"/>
    <property type="project" value="UniProtKB-UniRule"/>
</dbReference>
<dbReference type="GO" id="GO:0006099">
    <property type="term" value="P:tricarboxylic acid cycle"/>
    <property type="evidence" value="ECO:0007669"/>
    <property type="project" value="InterPro"/>
</dbReference>
<dbReference type="FunFam" id="1.20.1440.90:FF:000002">
    <property type="entry name" value="Phosphoenolpyruvate carboxylase"/>
    <property type="match status" value="1"/>
</dbReference>
<dbReference type="Gene3D" id="1.20.1440.90">
    <property type="entry name" value="Phosphoenolpyruvate/pyruvate domain"/>
    <property type="match status" value="1"/>
</dbReference>
<dbReference type="HAMAP" id="MF_00595">
    <property type="entry name" value="PEPcase_type1"/>
    <property type="match status" value="1"/>
</dbReference>
<dbReference type="InterPro" id="IPR021135">
    <property type="entry name" value="PEP_COase"/>
</dbReference>
<dbReference type="InterPro" id="IPR022805">
    <property type="entry name" value="PEP_COase_bac/pln-type"/>
</dbReference>
<dbReference type="InterPro" id="IPR018129">
    <property type="entry name" value="PEP_COase_Lys_AS"/>
</dbReference>
<dbReference type="InterPro" id="IPR033129">
    <property type="entry name" value="PEPCASE_His_AS"/>
</dbReference>
<dbReference type="InterPro" id="IPR015813">
    <property type="entry name" value="Pyrv/PenolPyrv_kinase-like_dom"/>
</dbReference>
<dbReference type="NCBIfam" id="NF000584">
    <property type="entry name" value="PRK00009.1"/>
    <property type="match status" value="1"/>
</dbReference>
<dbReference type="PANTHER" id="PTHR30523">
    <property type="entry name" value="PHOSPHOENOLPYRUVATE CARBOXYLASE"/>
    <property type="match status" value="1"/>
</dbReference>
<dbReference type="PANTHER" id="PTHR30523:SF6">
    <property type="entry name" value="PHOSPHOENOLPYRUVATE CARBOXYLASE"/>
    <property type="match status" value="1"/>
</dbReference>
<dbReference type="Pfam" id="PF00311">
    <property type="entry name" value="PEPcase"/>
    <property type="match status" value="1"/>
</dbReference>
<dbReference type="PRINTS" id="PR00150">
    <property type="entry name" value="PEPCARBXLASE"/>
</dbReference>
<dbReference type="SUPFAM" id="SSF51621">
    <property type="entry name" value="Phosphoenolpyruvate/pyruvate domain"/>
    <property type="match status" value="1"/>
</dbReference>
<dbReference type="PROSITE" id="PS00781">
    <property type="entry name" value="PEPCASE_1"/>
    <property type="match status" value="1"/>
</dbReference>
<dbReference type="PROSITE" id="PS00393">
    <property type="entry name" value="PEPCASE_2"/>
    <property type="match status" value="1"/>
</dbReference>
<comment type="function">
    <text evidence="1">Forms oxaloacetate, a four-carbon dicarboxylic acid source for the tricarboxylic acid cycle.</text>
</comment>
<comment type="catalytic activity">
    <reaction evidence="1">
        <text>oxaloacetate + phosphate = phosphoenolpyruvate + hydrogencarbonate</text>
        <dbReference type="Rhea" id="RHEA:28370"/>
        <dbReference type="ChEBI" id="CHEBI:16452"/>
        <dbReference type="ChEBI" id="CHEBI:17544"/>
        <dbReference type="ChEBI" id="CHEBI:43474"/>
        <dbReference type="ChEBI" id="CHEBI:58702"/>
        <dbReference type="EC" id="4.1.1.31"/>
    </reaction>
</comment>
<comment type="cofactor">
    <cofactor evidence="1">
        <name>Mg(2+)</name>
        <dbReference type="ChEBI" id="CHEBI:18420"/>
    </cofactor>
</comment>
<comment type="similarity">
    <text evidence="1">Belongs to the PEPCase type 1 family.</text>
</comment>
<name>CAPP_SALPK</name>
<protein>
    <recommendedName>
        <fullName evidence="1">Phosphoenolpyruvate carboxylase</fullName>
        <shortName evidence="1">PEPC</shortName>
        <shortName evidence="1">PEPCase</shortName>
        <ecNumber evidence="1">4.1.1.31</ecNumber>
    </recommendedName>
</protein>
<reference key="1">
    <citation type="journal article" date="2009" name="BMC Genomics">
        <title>Pseudogene accumulation in the evolutionary histories of Salmonella enterica serovars Paratyphi A and Typhi.</title>
        <authorList>
            <person name="Holt K.E."/>
            <person name="Thomson N.R."/>
            <person name="Wain J."/>
            <person name="Langridge G.C."/>
            <person name="Hasan R."/>
            <person name="Bhutta Z.A."/>
            <person name="Quail M.A."/>
            <person name="Norbertczak H."/>
            <person name="Walker D."/>
            <person name="Simmonds M."/>
            <person name="White B."/>
            <person name="Bason N."/>
            <person name="Mungall K."/>
            <person name="Dougan G."/>
            <person name="Parkhill J."/>
        </authorList>
    </citation>
    <scope>NUCLEOTIDE SEQUENCE [LARGE SCALE GENOMIC DNA]</scope>
    <source>
        <strain>AKU_12601</strain>
    </source>
</reference>
<organism>
    <name type="scientific">Salmonella paratyphi A (strain AKU_12601)</name>
    <dbReference type="NCBI Taxonomy" id="554290"/>
    <lineage>
        <taxon>Bacteria</taxon>
        <taxon>Pseudomonadati</taxon>
        <taxon>Pseudomonadota</taxon>
        <taxon>Gammaproteobacteria</taxon>
        <taxon>Enterobacterales</taxon>
        <taxon>Enterobacteriaceae</taxon>
        <taxon>Salmonella</taxon>
    </lineage>
</organism>
<keyword id="KW-0120">Carbon dioxide fixation</keyword>
<keyword id="KW-0456">Lyase</keyword>
<keyword id="KW-0460">Magnesium</keyword>
<accession>B5BJN0</accession>
<sequence>MNEQYSALRSNVSMLGKVLGETIKDALGEHILDRVETIRKLSKSSRAGNEANRRELLTTLQNLSNDELLPVARAFSQFLNLANTAEQYHSISPKGEAASNPEVIARTLRKLKNQPDLNDATIKKAVESLSLELVLTAHPTEITRRTLIHKMGEINNCLKQLDNTDIADYERHQVMRRLRQLIAQSWHTDEIRKQRPSPVDEAKWGFAVVENSLWQGVPNYLRELNEQLEENLGYKLPVDFVPVRFTSWMGGDRDGNPNVTADITRHVLLLSRWKATDLFLKDIHVLVSELSMVDATPELLALVGEEGASEPYRYLMKKLRARLMATQSWLEARLKGEELPKPAGLLTQNEQLWEPLYACYQSLQACGMGIIANGELLDTLRRVKCFGVPLVRIDIRQESTRHTEALGEITRYLGIGDYESWSEADKQAFLIRELNSKRPLLPRNWEPSNDTREVLETCKVIAEAPKGSIAAYVISMAKTPSDVLAVHLLLKEAGIGFAMPVAPLFETLDDLNNADDVMTQLLNIDWYRGLIQGKQMVMIGYSDSAKDAGVMAASWAQYQAQDALIKTCEKAGIELTLFHGRGGSIGRGGAPAHAALLSQPPGSLEGGLRVTEQGEMIRFKYGLPEVTVSSLSLYTSAILEANLLPPPEPKDSWRHIMDELSVISCETYRGYVRENKDFVPYFRSATPEQELGKLPLGSRPAKRRPTGGVESLRAIPWIFAWTQNRLMLPAWLGAGTALQKVVEDGKQSELEAMCRDWPFFSTRLGMLEMVFSKADLWLADYYDQRLVAKTLWPLGKELRDLLEEDIKVVLAIANDSHLMADLPWIAESIQLRNVYTDPLNVLQAELLYRSRLTEEQGKSPDPRVEQALMVTIAGVAAGMRNTG</sequence>
<evidence type="ECO:0000255" key="1">
    <source>
        <dbReference type="HAMAP-Rule" id="MF_00595"/>
    </source>
</evidence>
<proteinExistence type="inferred from homology"/>
<feature type="chain" id="PRO_1000129843" description="Phosphoenolpyruvate carboxylase">
    <location>
        <begin position="1"/>
        <end position="883"/>
    </location>
</feature>
<feature type="active site" evidence="1">
    <location>
        <position position="138"/>
    </location>
</feature>
<feature type="active site" evidence="1">
    <location>
        <position position="546"/>
    </location>
</feature>